<evidence type="ECO:0000250" key="1"/>
<evidence type="ECO:0000250" key="2">
    <source>
        <dbReference type="UniProtKB" id="Q9H160"/>
    </source>
</evidence>
<evidence type="ECO:0000250" key="3">
    <source>
        <dbReference type="UniProtKB" id="Q9UK53"/>
    </source>
</evidence>
<evidence type="ECO:0000255" key="4">
    <source>
        <dbReference type="PROSITE-ProRule" id="PRU00146"/>
    </source>
</evidence>
<evidence type="ECO:0000256" key="5">
    <source>
        <dbReference type="SAM" id="MobiDB-lite"/>
    </source>
</evidence>
<evidence type="ECO:0000269" key="6">
    <source>
    </source>
</evidence>
<evidence type="ECO:0000303" key="7">
    <source>
    </source>
</evidence>
<evidence type="ECO:0000305" key="8"/>
<proteinExistence type="evidence at transcript level"/>
<name>ING1_MOUSE</name>
<protein>
    <recommendedName>
        <fullName>Inhibitor of growth protein 1</fullName>
    </recommendedName>
</protein>
<reference evidence="8" key="1">
    <citation type="journal article" date="1999" name="J. Biol. Chem.">
        <title>Structure and regulation of the mouse ing1 gene. Three alternative transcripts encode two PHD finger proteins that have opposite effects on p53 function.</title>
        <authorList>
            <person name="Zeremski M."/>
            <person name="Hill J.E."/>
            <person name="Kwek S.S.S."/>
            <person name="Grigorian I.A."/>
            <person name="Gurova K.V."/>
            <person name="Garkavtsev I.V."/>
            <person name="Diatchenko L."/>
            <person name="Koonin E.V."/>
            <person name="Gudkov A.V."/>
        </authorList>
    </citation>
    <scope>NUCLEOTIDE SEQUENCE [GENOMIC DNA / MRNA] (ISOFORMS 1 AND 2)</scope>
    <scope>FUNCTION</scope>
    <scope>TISSUE SPECIFICITY</scope>
    <scope>DEVELOPMENTAL STAGE</scope>
    <source>
        <strain>129/SvJ</strain>
        <tissue>Brain</tissue>
        <tissue>Embryonic fibroblast</tissue>
        <tissue>Spleen</tissue>
    </source>
</reference>
<reference evidence="8" key="2">
    <citation type="submission" date="1999-05" db="EMBL/GenBank/DDBJ databases">
        <title>Structural organization and expression pattern of the murine ING1 gene.</title>
        <authorList>
            <person name="Rancourt D."/>
            <person name="Garkavtsev I."/>
        </authorList>
    </citation>
    <scope>NUCLEOTIDE SEQUENCE [MRNA] (ISOFORM 1)</scope>
</reference>
<reference key="3">
    <citation type="journal article" date="2004" name="Genome Res.">
        <title>The status, quality, and expansion of the NIH full-length cDNA project: the Mammalian Gene Collection (MGC).</title>
        <authorList>
            <consortium name="The MGC Project Team"/>
        </authorList>
    </citation>
    <scope>NUCLEOTIDE SEQUENCE [LARGE SCALE MRNA] (ISOFORM 1)</scope>
    <source>
        <tissue>Brain</tissue>
        <tissue>Mammary gland</tissue>
    </source>
</reference>
<organism>
    <name type="scientific">Mus musculus</name>
    <name type="common">Mouse</name>
    <dbReference type="NCBI Taxonomy" id="10090"/>
    <lineage>
        <taxon>Eukaryota</taxon>
        <taxon>Metazoa</taxon>
        <taxon>Chordata</taxon>
        <taxon>Craniata</taxon>
        <taxon>Vertebrata</taxon>
        <taxon>Euteleostomi</taxon>
        <taxon>Mammalia</taxon>
        <taxon>Eutheria</taxon>
        <taxon>Euarchontoglires</taxon>
        <taxon>Glires</taxon>
        <taxon>Rodentia</taxon>
        <taxon>Myomorpha</taxon>
        <taxon>Muroidea</taxon>
        <taxon>Muridae</taxon>
        <taxon>Murinae</taxon>
        <taxon>Mus</taxon>
        <taxon>Mus</taxon>
    </lineage>
</organism>
<sequence length="279" mass="32109">MLSPANGEQIHLVNYVEDYLDSIESLPFDLQRNVSLMREIDAKYQEILKELDDYYEKFKRETDGTQKRRVLHCIQRALIRSQELGDEKIQIVSQMVELVENRSRQVDSHVELFEAHQDISDGTGGSGKAGQDKSKSEAITQADKPNNKRSRRQRNNENRENASNNHDHDDITSGTPKEKKAKTSKKKKRSKAKAEREASPADLPIDPNEPTYCLCNQVSYGEMIGCDNDECPIEWFHFSCVGLNHKPKGKWYCPKCRGESEKTMDKALEKSKKERAYNR</sequence>
<keyword id="KW-0025">Alternative splicing</keyword>
<keyword id="KW-0131">Cell cycle</keyword>
<keyword id="KW-1017">Isopeptide bond</keyword>
<keyword id="KW-0479">Metal-binding</keyword>
<keyword id="KW-0539">Nucleus</keyword>
<keyword id="KW-1185">Reference proteome</keyword>
<keyword id="KW-0043">Tumor suppressor</keyword>
<keyword id="KW-0832">Ubl conjugation</keyword>
<keyword id="KW-0862">Zinc</keyword>
<keyword id="KW-0863">Zinc-finger</keyword>
<accession>Q9QXV3</accession>
<accession>B2RWH0</accession>
<accession>Q9QUP8</accession>
<accession>Q9QXV4</accession>
<accession>Q9QZX3</accession>
<comment type="function">
    <text evidence="6">Isoform 1 inhibits p53-dependent transcriptional activation and may function as an oncoprotein. Isoform 2 acts as a negative growth regulator by cooperating with p53 in transcriptional activation of p53-responsive genes and may act as a tumor suppressor.</text>
</comment>
<comment type="subunit">
    <text evidence="3">Interacts with H3K4me3 and to a lesser extent with H3K4me2. Isoform 2 interacts with RSL1D1.</text>
</comment>
<comment type="subcellular location">
    <subcellularLocation>
        <location evidence="1">Nucleus</location>
    </subcellularLocation>
</comment>
<comment type="alternative products">
    <event type="alternative splicing"/>
    <isoform>
        <id>Q9QXV3-1</id>
        <name>1</name>
        <name>1b</name>
        <name>p37</name>
        <sequence type="displayed"/>
    </isoform>
    <isoform>
        <id>Q9QXV3-2</id>
        <name>2</name>
        <name>1a</name>
        <name>1c</name>
        <name>p31</name>
        <sequence type="described" ref="VSP_050378"/>
    </isoform>
</comment>
<comment type="tissue specificity">
    <text evidence="6">In the adult, widely expressed with highest levels in thymus and testis.</text>
</comment>
<comment type="developmental stage">
    <text evidence="6">Expressed throughout the whole embryo at all stages of development examined. At day 10, highest expression is found in the yolk sac while at day 16 and 18, higher levels are found in inner compartments of bone. In the embryo, highest expression of isoform 1 is found at day 11 while highest expression of isoform 2 is found at day 7.</text>
</comment>
<comment type="domain">
    <text evidence="1">The PHD-type zinc finger mediates the binding to H3K4me3.</text>
</comment>
<comment type="domain">
    <text evidence="3">The polybasic region (PBR) is responsive to the binding to phosphoinositides (PtdInsPs), including phosphatidylinositol 5-phosphate (PtdIns(5)P).</text>
</comment>
<comment type="similarity">
    <text evidence="8">Belongs to the ING family.</text>
</comment>
<gene>
    <name type="primary">Ing1</name>
</gene>
<dbReference type="EMBL" id="AF177753">
    <property type="protein sequence ID" value="AAF16911.1"/>
    <property type="molecule type" value="Genomic_DNA"/>
</dbReference>
<dbReference type="EMBL" id="AF177755">
    <property type="protein sequence ID" value="AAF16908.1"/>
    <property type="molecule type" value="mRNA"/>
</dbReference>
<dbReference type="EMBL" id="AF177756">
    <property type="protein sequence ID" value="AAF16909.1"/>
    <property type="molecule type" value="mRNA"/>
</dbReference>
<dbReference type="EMBL" id="AF177757">
    <property type="protein sequence ID" value="AAF16910.1"/>
    <property type="molecule type" value="mRNA"/>
</dbReference>
<dbReference type="EMBL" id="AF149820">
    <property type="protein sequence ID" value="AAF09183.1"/>
    <property type="molecule type" value="mRNA"/>
</dbReference>
<dbReference type="EMBL" id="BC016573">
    <property type="protein sequence ID" value="AAH16573.1"/>
    <property type="molecule type" value="mRNA"/>
</dbReference>
<dbReference type="EMBL" id="BC147770">
    <property type="protein sequence ID" value="AAI47771.1"/>
    <property type="molecule type" value="mRNA"/>
</dbReference>
<dbReference type="EMBL" id="BC147784">
    <property type="protein sequence ID" value="AAI47785.1"/>
    <property type="molecule type" value="mRNA"/>
</dbReference>
<dbReference type="CCDS" id="CCDS22097.1">
    <molecule id="Q9QXV3-1"/>
</dbReference>
<dbReference type="CCDS" id="CCDS85499.1">
    <molecule id="Q9QXV3-2"/>
</dbReference>
<dbReference type="RefSeq" id="NP_001289386.1">
    <molecule id="Q9QXV3-2"/>
    <property type="nucleotide sequence ID" value="NM_001302457.1"/>
</dbReference>
<dbReference type="RefSeq" id="NP_001289387.1">
    <molecule id="Q9QXV3-2"/>
    <property type="nucleotide sequence ID" value="NM_001302458.1"/>
</dbReference>
<dbReference type="RefSeq" id="NP_001289388.1">
    <molecule id="Q9QXV3-2"/>
    <property type="nucleotide sequence ID" value="NM_001302459.1"/>
</dbReference>
<dbReference type="RefSeq" id="NP_001289389.1">
    <molecule id="Q9QXV3-2"/>
    <property type="nucleotide sequence ID" value="NM_001302460.1"/>
</dbReference>
<dbReference type="RefSeq" id="NP_036049.2">
    <molecule id="Q9QXV3-1"/>
    <property type="nucleotide sequence ID" value="NM_011919.5"/>
</dbReference>
<dbReference type="SMR" id="Q9QXV3"/>
<dbReference type="BioGRID" id="204916">
    <property type="interactions" value="4"/>
</dbReference>
<dbReference type="ComplexPortal" id="CPX-3441">
    <property type="entry name" value="SIN3A histone deacetylase complex, ES cell-specific variant"/>
</dbReference>
<dbReference type="ComplexPortal" id="CPX-3443">
    <property type="entry name" value="SIN3A histone deacetylase complex"/>
</dbReference>
<dbReference type="ComplexPortal" id="CPX-3444">
    <property type="entry name" value="SIN3B histone deacetylase complex"/>
</dbReference>
<dbReference type="FunCoup" id="Q9QXV3">
    <property type="interactions" value="3397"/>
</dbReference>
<dbReference type="IntAct" id="Q9QXV3">
    <property type="interactions" value="1"/>
</dbReference>
<dbReference type="STRING" id="10090.ENSMUSP00000062593"/>
<dbReference type="GlyGen" id="Q9QXV3">
    <property type="glycosylation" value="1 site, 1 O-linked glycan (1 site)"/>
</dbReference>
<dbReference type="iPTMnet" id="Q9QXV3"/>
<dbReference type="PhosphoSitePlus" id="Q9QXV3"/>
<dbReference type="PaxDb" id="10090-ENSMUSP00000062593"/>
<dbReference type="PeptideAtlas" id="Q9QXV3"/>
<dbReference type="ProteomicsDB" id="266990">
    <molecule id="Q9QXV3-1"/>
</dbReference>
<dbReference type="ProteomicsDB" id="266991">
    <molecule id="Q9QXV3-2"/>
</dbReference>
<dbReference type="Pumba" id="Q9QXV3"/>
<dbReference type="Antibodypedia" id="4248">
    <property type="antibodies" value="499 antibodies from 38 providers"/>
</dbReference>
<dbReference type="DNASU" id="26356"/>
<dbReference type="Ensembl" id="ENSMUST00000054399.6">
    <molecule id="Q9QXV3-1"/>
    <property type="protein sequence ID" value="ENSMUSP00000062593.5"/>
    <property type="gene ID" value="ENSMUSG00000045969.9"/>
</dbReference>
<dbReference type="Ensembl" id="ENSMUST00000209565.2">
    <molecule id="Q9QXV3-2"/>
    <property type="protein sequence ID" value="ENSMUSP00000147892.2"/>
    <property type="gene ID" value="ENSMUSG00000045969.9"/>
</dbReference>
<dbReference type="Ensembl" id="ENSMUST00000210041.2">
    <molecule id="Q9QXV3-2"/>
    <property type="protein sequence ID" value="ENSMUSP00000147270.2"/>
    <property type="gene ID" value="ENSMUSG00000045969.9"/>
</dbReference>
<dbReference type="Ensembl" id="ENSMUST00000210740.2">
    <molecule id="Q9QXV3-2"/>
    <property type="protein sequence ID" value="ENSMUSP00000147476.2"/>
    <property type="gene ID" value="ENSMUSG00000045969.9"/>
</dbReference>
<dbReference type="Ensembl" id="ENSMUST00000211007.2">
    <molecule id="Q9QXV3-2"/>
    <property type="protein sequence ID" value="ENSMUSP00000148030.2"/>
    <property type="gene ID" value="ENSMUSG00000045969.9"/>
</dbReference>
<dbReference type="GeneID" id="26356"/>
<dbReference type="KEGG" id="mmu:26356"/>
<dbReference type="UCSC" id="uc009kvk.2">
    <molecule id="Q9QXV3-1"/>
    <property type="organism name" value="mouse"/>
</dbReference>
<dbReference type="AGR" id="MGI:1349481"/>
<dbReference type="CTD" id="3621"/>
<dbReference type="MGI" id="MGI:1349481">
    <property type="gene designation" value="Ing1"/>
</dbReference>
<dbReference type="VEuPathDB" id="HostDB:ENSMUSG00000045969"/>
<dbReference type="eggNOG" id="KOG1973">
    <property type="taxonomic scope" value="Eukaryota"/>
</dbReference>
<dbReference type="GeneTree" id="ENSGT00940000155401"/>
<dbReference type="HOGENOM" id="CLU_031900_5_1_1"/>
<dbReference type="InParanoid" id="Q9QXV3"/>
<dbReference type="OMA" id="MREQGNQ"/>
<dbReference type="OrthoDB" id="5411773at2759"/>
<dbReference type="PhylomeDB" id="Q9QXV3"/>
<dbReference type="TreeFam" id="TF352014"/>
<dbReference type="BioGRID-ORCS" id="26356">
    <property type="hits" value="5 hits in 82 CRISPR screens"/>
</dbReference>
<dbReference type="PRO" id="PR:Q9QXV3"/>
<dbReference type="Proteomes" id="UP000000589">
    <property type="component" value="Chromosome 8"/>
</dbReference>
<dbReference type="RNAct" id="Q9QXV3">
    <property type="molecule type" value="protein"/>
</dbReference>
<dbReference type="Bgee" id="ENSMUSG00000045969">
    <property type="expression patterns" value="Expressed in metanephric cortical collecting duct and 270 other cell types or tissues"/>
</dbReference>
<dbReference type="ExpressionAtlas" id="Q9QXV3">
    <property type="expression patterns" value="baseline and differential"/>
</dbReference>
<dbReference type="GO" id="GO:0005634">
    <property type="term" value="C:nucleus"/>
    <property type="evidence" value="ECO:0000315"/>
    <property type="project" value="MGI"/>
</dbReference>
<dbReference type="GO" id="GO:0070822">
    <property type="term" value="C:Sin3-type complex"/>
    <property type="evidence" value="ECO:0000303"/>
    <property type="project" value="ComplexPortal"/>
</dbReference>
<dbReference type="GO" id="GO:0140002">
    <property type="term" value="F:histone H3K4me3 reader activity"/>
    <property type="evidence" value="ECO:0007669"/>
    <property type="project" value="Ensembl"/>
</dbReference>
<dbReference type="GO" id="GO:0008270">
    <property type="term" value="F:zinc ion binding"/>
    <property type="evidence" value="ECO:0007669"/>
    <property type="project" value="UniProtKB-KW"/>
</dbReference>
<dbReference type="GO" id="GO:0030336">
    <property type="term" value="P:negative regulation of cell migration"/>
    <property type="evidence" value="ECO:0000303"/>
    <property type="project" value="ComplexPortal"/>
</dbReference>
<dbReference type="GO" id="GO:1902455">
    <property type="term" value="P:negative regulation of stem cell population maintenance"/>
    <property type="evidence" value="ECO:0000303"/>
    <property type="project" value="ComplexPortal"/>
</dbReference>
<dbReference type="GO" id="GO:0000122">
    <property type="term" value="P:negative regulation of transcription by RNA polymerase II"/>
    <property type="evidence" value="ECO:0000303"/>
    <property type="project" value="ComplexPortal"/>
</dbReference>
<dbReference type="GO" id="GO:0030512">
    <property type="term" value="P:negative regulation of transforming growth factor beta receptor signaling pathway"/>
    <property type="evidence" value="ECO:0000303"/>
    <property type="project" value="ComplexPortal"/>
</dbReference>
<dbReference type="GO" id="GO:0045893">
    <property type="term" value="P:positive regulation of DNA-templated transcription"/>
    <property type="evidence" value="ECO:0000314"/>
    <property type="project" value="MGI"/>
</dbReference>
<dbReference type="GO" id="GO:1902459">
    <property type="term" value="P:positive regulation of stem cell population maintenance"/>
    <property type="evidence" value="ECO:0000303"/>
    <property type="project" value="ComplexPortal"/>
</dbReference>
<dbReference type="GO" id="GO:0006606">
    <property type="term" value="P:protein import into nucleus"/>
    <property type="evidence" value="ECO:0000315"/>
    <property type="project" value="MGI"/>
</dbReference>
<dbReference type="GO" id="GO:0043067">
    <property type="term" value="P:regulation of programmed cell death"/>
    <property type="evidence" value="ECO:0000315"/>
    <property type="project" value="MGI"/>
</dbReference>
<dbReference type="CDD" id="cd16860">
    <property type="entry name" value="ING_ING1"/>
    <property type="match status" value="1"/>
</dbReference>
<dbReference type="CDD" id="cd15584">
    <property type="entry name" value="PHD_ING1_2"/>
    <property type="match status" value="1"/>
</dbReference>
<dbReference type="FunFam" id="3.30.40.10:FF:000021">
    <property type="entry name" value="Inhibitor of growth 2b"/>
    <property type="match status" value="1"/>
</dbReference>
<dbReference type="Gene3D" id="6.10.140.1740">
    <property type="match status" value="1"/>
</dbReference>
<dbReference type="Gene3D" id="3.30.40.10">
    <property type="entry name" value="Zinc/RING finger domain, C3HC4 (zinc finger)"/>
    <property type="match status" value="1"/>
</dbReference>
<dbReference type="InterPro" id="IPR028643">
    <property type="entry name" value="ING1_PHD_Znf"/>
</dbReference>
<dbReference type="InterPro" id="IPR028651">
    <property type="entry name" value="ING_fam"/>
</dbReference>
<dbReference type="InterPro" id="IPR024610">
    <property type="entry name" value="ING_N_histone-binding"/>
</dbReference>
<dbReference type="InterPro" id="IPR019786">
    <property type="entry name" value="Zinc_finger_PHD-type_CS"/>
</dbReference>
<dbReference type="InterPro" id="IPR011011">
    <property type="entry name" value="Znf_FYVE_PHD"/>
</dbReference>
<dbReference type="InterPro" id="IPR001965">
    <property type="entry name" value="Znf_PHD"/>
</dbReference>
<dbReference type="InterPro" id="IPR019787">
    <property type="entry name" value="Znf_PHD-finger"/>
</dbReference>
<dbReference type="InterPro" id="IPR013083">
    <property type="entry name" value="Znf_RING/FYVE/PHD"/>
</dbReference>
<dbReference type="PANTHER" id="PTHR10333">
    <property type="entry name" value="INHIBITOR OF GROWTH PROTEIN"/>
    <property type="match status" value="1"/>
</dbReference>
<dbReference type="PANTHER" id="PTHR10333:SF85">
    <property type="entry name" value="INHIBITOR OF GROWTH PROTEIN 1"/>
    <property type="match status" value="1"/>
</dbReference>
<dbReference type="Pfam" id="PF12998">
    <property type="entry name" value="ING"/>
    <property type="match status" value="1"/>
</dbReference>
<dbReference type="SMART" id="SM01408">
    <property type="entry name" value="ING"/>
    <property type="match status" value="1"/>
</dbReference>
<dbReference type="SMART" id="SM00249">
    <property type="entry name" value="PHD"/>
    <property type="match status" value="1"/>
</dbReference>
<dbReference type="SUPFAM" id="SSF57903">
    <property type="entry name" value="FYVE/PHD zinc finger"/>
    <property type="match status" value="1"/>
</dbReference>
<dbReference type="PROSITE" id="PS01359">
    <property type="entry name" value="ZF_PHD_1"/>
    <property type="match status" value="1"/>
</dbReference>
<dbReference type="PROSITE" id="PS50016">
    <property type="entry name" value="ZF_PHD_2"/>
    <property type="match status" value="1"/>
</dbReference>
<feature type="chain" id="PRO_0000212662" description="Inhibitor of growth protein 1">
    <location>
        <begin position="1"/>
        <end position="279"/>
    </location>
</feature>
<feature type="zinc finger region" description="PHD-type" evidence="4">
    <location>
        <begin position="210"/>
        <end position="259"/>
    </location>
</feature>
<feature type="region of interest" description="Disordered" evidence="5">
    <location>
        <begin position="115"/>
        <end position="206"/>
    </location>
</feature>
<feature type="region of interest" description="PBR" evidence="2">
    <location>
        <begin position="262"/>
        <end position="279"/>
    </location>
</feature>
<feature type="compositionally biased region" description="Basic and acidic residues" evidence="5">
    <location>
        <begin position="154"/>
        <end position="171"/>
    </location>
</feature>
<feature type="compositionally biased region" description="Basic residues" evidence="5">
    <location>
        <begin position="179"/>
        <end position="191"/>
    </location>
</feature>
<feature type="binding site" evidence="3">
    <location>
        <position position="213"/>
    </location>
    <ligand>
        <name>Zn(2+)</name>
        <dbReference type="ChEBI" id="CHEBI:29105"/>
        <label>1</label>
    </ligand>
</feature>
<feature type="binding site" evidence="3">
    <location>
        <position position="215"/>
    </location>
    <ligand>
        <name>Zn(2+)</name>
        <dbReference type="ChEBI" id="CHEBI:29105"/>
        <label>1</label>
    </ligand>
</feature>
<feature type="binding site" evidence="3">
    <location>
        <position position="226"/>
    </location>
    <ligand>
        <name>Zn(2+)</name>
        <dbReference type="ChEBI" id="CHEBI:29105"/>
        <label>2</label>
    </ligand>
</feature>
<feature type="binding site" evidence="3">
    <location>
        <position position="231"/>
    </location>
    <ligand>
        <name>Zn(2+)</name>
        <dbReference type="ChEBI" id="CHEBI:29105"/>
        <label>2</label>
    </ligand>
</feature>
<feature type="binding site" evidence="3">
    <location>
        <position position="237"/>
    </location>
    <ligand>
        <name>Zn(2+)</name>
        <dbReference type="ChEBI" id="CHEBI:29105"/>
        <label>1</label>
    </ligand>
</feature>
<feature type="binding site" evidence="3">
    <location>
        <position position="240"/>
    </location>
    <ligand>
        <name>Zn(2+)</name>
        <dbReference type="ChEBI" id="CHEBI:29105"/>
        <label>1</label>
    </ligand>
</feature>
<feature type="binding site" evidence="3">
    <location>
        <position position="253"/>
    </location>
    <ligand>
        <name>Zn(2+)</name>
        <dbReference type="ChEBI" id="CHEBI:29105"/>
        <label>2</label>
    </ligand>
</feature>
<feature type="binding site" evidence="3">
    <location>
        <position position="256"/>
    </location>
    <ligand>
        <name>Zn(2+)</name>
        <dbReference type="ChEBI" id="CHEBI:29105"/>
        <label>2</label>
    </ligand>
</feature>
<feature type="site" description="Histone H3K4me3 binding" evidence="3">
    <location>
        <position position="212"/>
    </location>
</feature>
<feature type="site" description="Histone H3K4me3 binding" evidence="3">
    <location>
        <position position="223"/>
    </location>
</feature>
<feature type="site" description="Histone H3K4me3 binding" evidence="3">
    <location>
        <position position="227"/>
    </location>
</feature>
<feature type="site" description="Histone H3K4me3 binding" evidence="3">
    <location>
        <position position="235"/>
    </location>
</feature>
<feature type="cross-link" description="Glycyl lysine isopeptide (Lys-Gly) (interchain with G-Cter in SUMO2)" evidence="3">
    <location>
        <position position="135"/>
    </location>
</feature>
<feature type="splice variant" id="VSP_050378" description="In isoform 2." evidence="7">
    <location>
        <begin position="1"/>
        <end position="94"/>
    </location>
</feature>
<feature type="sequence conflict" description="In Ref. 2; AAF09183." evidence="8" ref="2">
    <original>L</original>
    <variation>F</variation>
    <location>
        <position position="203"/>
    </location>
</feature>